<comment type="function">
    <text evidence="2">Catalyzes the cleavage of glutathione into 5-oxo-L-proline and a Cys-Gly dipeptide. Acts specifically on glutathione, but not on other gamma-glutamyl peptides.</text>
</comment>
<comment type="catalytic activity">
    <reaction evidence="2">
        <text>glutathione = L-cysteinylglycine + 5-oxo-L-proline</text>
        <dbReference type="Rhea" id="RHEA:47724"/>
        <dbReference type="ChEBI" id="CHEBI:57925"/>
        <dbReference type="ChEBI" id="CHEBI:58402"/>
        <dbReference type="ChEBI" id="CHEBI:61694"/>
        <dbReference type="EC" id="4.3.2.7"/>
    </reaction>
</comment>
<comment type="biophysicochemical properties">
    <kinetics>
        <KM evidence="2">3.1 mM for glutathione</KM>
        <text evidence="2">kcat is 13 min(-1) for glutathione.</text>
    </kinetics>
</comment>
<comment type="similarity">
    <text evidence="4">Belongs to the gamma-glutamylcyclotransferase family. ChaC subfamily.</text>
</comment>
<comment type="sequence caution" evidence="4">
    <conflict type="erroneous initiation">
        <sequence resource="EMBL-CDS" id="AAA20198"/>
    </conflict>
    <text>Extended N-terminus.</text>
</comment>
<comment type="sequence caution" evidence="4">
    <conflict type="erroneous initiation">
        <sequence resource="EMBL-CDS" id="BAA36076"/>
    </conflict>
    <text>Extended N-terminus.</text>
</comment>
<protein>
    <recommendedName>
        <fullName evidence="5">Glutathione-specific gamma-glutamylcyclotransferase</fullName>
        <shortName evidence="3">Gamma-GCG</shortName>
        <ecNumber evidence="2">4.3.2.7</ecNumber>
    </recommendedName>
    <alternativeName>
        <fullName evidence="6">Cation transport regulatory protein ChaC</fullName>
    </alternativeName>
</protein>
<feature type="chain" id="PRO_0000089636" description="Glutathione-specific gamma-glutamylcyclotransferase">
    <location>
        <begin position="1"/>
        <end position="231"/>
    </location>
</feature>
<feature type="active site" description="Proton acceptor" evidence="1">
    <location>
        <position position="127"/>
    </location>
</feature>
<feature type="binding site" evidence="1">
    <location>
        <begin position="49"/>
        <end position="54"/>
    </location>
    <ligand>
        <name>substrate</name>
    </ligand>
</feature>
<feature type="sequence conflict" description="In Ref. 1; AAA20198." evidence="4" ref="1">
    <original>A</original>
    <variation>V</variation>
    <location>
        <position position="15"/>
    </location>
</feature>
<feature type="sequence conflict" description="In Ref. 1; AAA20198." evidence="4" ref="1">
    <original>C</original>
    <variation>F</variation>
    <location>
        <position position="79"/>
    </location>
</feature>
<name>CHAC_ECOLI</name>
<organism>
    <name type="scientific">Escherichia coli (strain K12)</name>
    <dbReference type="NCBI Taxonomy" id="83333"/>
    <lineage>
        <taxon>Bacteria</taxon>
        <taxon>Pseudomonadati</taxon>
        <taxon>Pseudomonadota</taxon>
        <taxon>Gammaproteobacteria</taxon>
        <taxon>Enterobacterales</taxon>
        <taxon>Enterobacteriaceae</taxon>
        <taxon>Escherichia</taxon>
    </lineage>
</organism>
<reference key="1">
    <citation type="submission" date="1994-07" db="EMBL/GenBank/DDBJ databases">
        <title>Accessory and regulatory proteins associated with the Ca2+/H+ antiporter of Escherichia coli.</title>
        <authorList>
            <person name="Ivey D.M."/>
            <person name="Guffanti A.A."/>
            <person name="Zemsky J."/>
            <person name="Pinner E."/>
            <person name="Karpel R."/>
            <person name="Padan E."/>
            <person name="Schuldiner S."/>
            <person name="Krulwich T.A."/>
        </authorList>
    </citation>
    <scope>NUCLEOTIDE SEQUENCE [GENOMIC DNA]</scope>
    <source>
        <strain>NM8191</strain>
    </source>
</reference>
<reference key="2">
    <citation type="journal article" date="1996" name="DNA Res.">
        <title>A 718-kb DNA sequence of the Escherichia coli K-12 genome corresponding to the 12.7-28.0 min region on the linkage map.</title>
        <authorList>
            <person name="Oshima T."/>
            <person name="Aiba H."/>
            <person name="Baba T."/>
            <person name="Fujita K."/>
            <person name="Hayashi K."/>
            <person name="Honjo A."/>
            <person name="Ikemoto K."/>
            <person name="Inada T."/>
            <person name="Itoh T."/>
            <person name="Kajihara M."/>
            <person name="Kanai K."/>
            <person name="Kashimoto K."/>
            <person name="Kimura S."/>
            <person name="Kitagawa M."/>
            <person name="Makino K."/>
            <person name="Masuda S."/>
            <person name="Miki T."/>
            <person name="Mizobuchi K."/>
            <person name="Mori H."/>
            <person name="Motomura K."/>
            <person name="Nakamura Y."/>
            <person name="Nashimoto H."/>
            <person name="Nishio Y."/>
            <person name="Saito N."/>
            <person name="Sampei G."/>
            <person name="Seki Y."/>
            <person name="Tagami H."/>
            <person name="Takemoto K."/>
            <person name="Wada C."/>
            <person name="Yamamoto Y."/>
            <person name="Yano M."/>
            <person name="Horiuchi T."/>
        </authorList>
    </citation>
    <scope>NUCLEOTIDE SEQUENCE [LARGE SCALE GENOMIC DNA]</scope>
    <source>
        <strain>K12 / W3110 / ATCC 27325 / DSM 5911</strain>
    </source>
</reference>
<reference key="3">
    <citation type="journal article" date="1997" name="Science">
        <title>The complete genome sequence of Escherichia coli K-12.</title>
        <authorList>
            <person name="Blattner F.R."/>
            <person name="Plunkett G. III"/>
            <person name="Bloch C.A."/>
            <person name="Perna N.T."/>
            <person name="Burland V."/>
            <person name="Riley M."/>
            <person name="Collado-Vides J."/>
            <person name="Glasner J.D."/>
            <person name="Rode C.K."/>
            <person name="Mayhew G.F."/>
            <person name="Gregor J."/>
            <person name="Davis N.W."/>
            <person name="Kirkpatrick H.A."/>
            <person name="Goeden M.A."/>
            <person name="Rose D.J."/>
            <person name="Mau B."/>
            <person name="Shao Y."/>
        </authorList>
    </citation>
    <scope>NUCLEOTIDE SEQUENCE [LARGE SCALE GENOMIC DNA]</scope>
    <source>
        <strain>K12 / MG1655 / ATCC 47076</strain>
    </source>
</reference>
<reference key="4">
    <citation type="journal article" date="2006" name="Mol. Syst. Biol.">
        <title>Highly accurate genome sequences of Escherichia coli K-12 strains MG1655 and W3110.</title>
        <authorList>
            <person name="Hayashi K."/>
            <person name="Morooka N."/>
            <person name="Yamamoto Y."/>
            <person name="Fujita K."/>
            <person name="Isono K."/>
            <person name="Choi S."/>
            <person name="Ohtsubo E."/>
            <person name="Baba T."/>
            <person name="Wanner B.L."/>
            <person name="Mori H."/>
            <person name="Horiuchi T."/>
        </authorList>
    </citation>
    <scope>NUCLEOTIDE SEQUENCE [LARGE SCALE GENOMIC DNA]</scope>
    <source>
        <strain>K12 / W3110 / ATCC 27325 / DSM 5911</strain>
    </source>
</reference>
<reference key="5">
    <citation type="journal article" date="2017" name="J. Biol. Chem.">
        <title>ChaC2, an enzyme for slow turnover of cytosolic glutathione.</title>
        <authorList>
            <person name="Kaur A."/>
            <person name="Gautam R."/>
            <person name="Srivastava R."/>
            <person name="Chandel A."/>
            <person name="Kumar A."/>
            <person name="Karthikeyan S."/>
            <person name="Bachhawat A.K."/>
        </authorList>
    </citation>
    <scope>FUNCTION</scope>
    <scope>CATALYTIC ACTIVITY</scope>
    <scope>BIOPHYSICOCHEMICAL PROPERTIES</scope>
</reference>
<gene>
    <name evidence="7" type="primary">chaC</name>
    <name type="ordered locus">b1218</name>
    <name type="ordered locus">JW1209</name>
</gene>
<keyword id="KW-0456">Lyase</keyword>
<keyword id="KW-1185">Reference proteome</keyword>
<accession>P39163</accession>
<accession>P77176</accession>
<sequence length="231" mass="25512">MITRDFLMNADCKTAFGAIEESLLWSAEQRAASLAATLACRPDEGPVWIFGYGSLMWNPALEFTESCTGTLVGWHRAFCLRLTAGRGTAHQPGRMLALKEGGRTTGVAYRLPEETLEQELTLLWKREMITGCYLPTWCQLDLDDGRTVNAIVFIMDPRHPEYESDTRAQVIAPLIAAASGPLGTNAQYLFSLEQELIKLGMQDDGLNDLLVSVKKLLAENFPDGVLRPGFA</sequence>
<evidence type="ECO:0000250" key="1">
    <source>
        <dbReference type="UniProtKB" id="O75223"/>
    </source>
</evidence>
<evidence type="ECO:0000269" key="2">
    <source>
    </source>
</evidence>
<evidence type="ECO:0000303" key="3">
    <source>
    </source>
</evidence>
<evidence type="ECO:0000305" key="4"/>
<evidence type="ECO:0000305" key="5">
    <source>
    </source>
</evidence>
<evidence type="ECO:0000305" key="6">
    <source ref="1"/>
</evidence>
<evidence type="ECO:0000312" key="7">
    <source>
        <dbReference type="EMBL" id="AAA20198.1"/>
    </source>
</evidence>
<proteinExistence type="evidence at protein level"/>
<dbReference type="EC" id="4.3.2.7" evidence="2"/>
<dbReference type="EMBL" id="L28709">
    <property type="protein sequence ID" value="AAA20198.1"/>
    <property type="status" value="ALT_INIT"/>
    <property type="molecule type" value="Genomic_DNA"/>
</dbReference>
<dbReference type="EMBL" id="U00096">
    <property type="protein sequence ID" value="AAC74302.2"/>
    <property type="molecule type" value="Genomic_DNA"/>
</dbReference>
<dbReference type="EMBL" id="AP009048">
    <property type="protein sequence ID" value="BAA36076.1"/>
    <property type="status" value="ALT_INIT"/>
    <property type="molecule type" value="Genomic_DNA"/>
</dbReference>
<dbReference type="PIR" id="G64868">
    <property type="entry name" value="G64868"/>
</dbReference>
<dbReference type="RefSeq" id="NP_415736.2">
    <property type="nucleotide sequence ID" value="NC_000913.3"/>
</dbReference>
<dbReference type="RefSeq" id="WP_001336325.1">
    <property type="nucleotide sequence ID" value="NZ_SSZK01000010.1"/>
</dbReference>
<dbReference type="SMR" id="P39163"/>
<dbReference type="BioGRID" id="4261606">
    <property type="interactions" value="12"/>
</dbReference>
<dbReference type="FunCoup" id="P39163">
    <property type="interactions" value="488"/>
</dbReference>
<dbReference type="IntAct" id="P39163">
    <property type="interactions" value="2"/>
</dbReference>
<dbReference type="STRING" id="511145.b1218"/>
<dbReference type="PaxDb" id="511145-b1218"/>
<dbReference type="EnsemblBacteria" id="AAC74302">
    <property type="protein sequence ID" value="AAC74302"/>
    <property type="gene ID" value="b1218"/>
</dbReference>
<dbReference type="GeneID" id="945793"/>
<dbReference type="KEGG" id="ecj:JW1209"/>
<dbReference type="KEGG" id="eco:b1218"/>
<dbReference type="KEGG" id="ecoc:C3026_07165"/>
<dbReference type="PATRIC" id="fig|511145.12.peg.1269"/>
<dbReference type="EchoBASE" id="EB2303"/>
<dbReference type="eggNOG" id="COG3703">
    <property type="taxonomic scope" value="Bacteria"/>
</dbReference>
<dbReference type="HOGENOM" id="CLU_070703_1_0_6"/>
<dbReference type="InParanoid" id="P39163"/>
<dbReference type="OMA" id="DHREKDG"/>
<dbReference type="OrthoDB" id="9795692at2"/>
<dbReference type="PhylomeDB" id="P39163"/>
<dbReference type="BioCyc" id="EcoCyc:EG12403-MONOMER"/>
<dbReference type="BioCyc" id="MetaCyc:EG12403-MONOMER"/>
<dbReference type="PRO" id="PR:P39163"/>
<dbReference type="Proteomes" id="UP000000625">
    <property type="component" value="Chromosome"/>
</dbReference>
<dbReference type="GO" id="GO:0005737">
    <property type="term" value="C:cytoplasm"/>
    <property type="evidence" value="ECO:0000318"/>
    <property type="project" value="GO_Central"/>
</dbReference>
<dbReference type="GO" id="GO:0003839">
    <property type="term" value="F:gamma-glutamylcyclotransferase activity"/>
    <property type="evidence" value="ECO:0000314"/>
    <property type="project" value="EcoCyc"/>
</dbReference>
<dbReference type="GO" id="GO:0061928">
    <property type="term" value="F:glutathione specific gamma-glutamylcyclotransferase activity"/>
    <property type="evidence" value="ECO:0000318"/>
    <property type="project" value="GO_Central"/>
</dbReference>
<dbReference type="GO" id="GO:0006751">
    <property type="term" value="P:glutathione catabolic process"/>
    <property type="evidence" value="ECO:0000269"/>
    <property type="project" value="EcoCyc"/>
</dbReference>
<dbReference type="CDD" id="cd06661">
    <property type="entry name" value="GGCT_like"/>
    <property type="match status" value="1"/>
</dbReference>
<dbReference type="FunFam" id="3.10.490.10:FF:000006">
    <property type="entry name" value="Gamma-glutamylcyclotransferase"/>
    <property type="match status" value="1"/>
</dbReference>
<dbReference type="Gene3D" id="3.10.490.10">
    <property type="entry name" value="Gamma-glutamyl cyclotransferase-like"/>
    <property type="match status" value="1"/>
</dbReference>
<dbReference type="InterPro" id="IPR006840">
    <property type="entry name" value="ChaC"/>
</dbReference>
<dbReference type="InterPro" id="IPR013024">
    <property type="entry name" value="GGCT-like"/>
</dbReference>
<dbReference type="InterPro" id="IPR036568">
    <property type="entry name" value="GGCT-like_sf"/>
</dbReference>
<dbReference type="PANTHER" id="PTHR12192">
    <property type="entry name" value="CATION TRANSPORT PROTEIN CHAC-RELATED"/>
    <property type="match status" value="1"/>
</dbReference>
<dbReference type="PANTHER" id="PTHR12192:SF2">
    <property type="entry name" value="GLUTATHIONE-SPECIFIC GAMMA-GLUTAMYLCYCLOTRANSFERASE 2"/>
    <property type="match status" value="1"/>
</dbReference>
<dbReference type="Pfam" id="PF04752">
    <property type="entry name" value="ChaC"/>
    <property type="match status" value="1"/>
</dbReference>
<dbReference type="SUPFAM" id="SSF110857">
    <property type="entry name" value="Gamma-glutamyl cyclotransferase-like"/>
    <property type="match status" value="1"/>
</dbReference>